<name>PGP_PYRFU</name>
<proteinExistence type="inferred from homology"/>
<dbReference type="EC" id="3.1.3.18" evidence="1"/>
<dbReference type="EMBL" id="AE009950">
    <property type="protein sequence ID" value="AAL81543.1"/>
    <property type="molecule type" value="Genomic_DNA"/>
</dbReference>
<dbReference type="RefSeq" id="WP_011012566.1">
    <property type="nucleotide sequence ID" value="NZ_CP023154.1"/>
</dbReference>
<dbReference type="SMR" id="Q8U111"/>
<dbReference type="STRING" id="186497.PF1419"/>
<dbReference type="PaxDb" id="186497-PF1419"/>
<dbReference type="KEGG" id="pfu:PF1419"/>
<dbReference type="PATRIC" id="fig|186497.12.peg.1482"/>
<dbReference type="eggNOG" id="arCOG01213">
    <property type="taxonomic scope" value="Archaea"/>
</dbReference>
<dbReference type="HOGENOM" id="CLU_044146_2_0_2"/>
<dbReference type="OrthoDB" id="120822at2157"/>
<dbReference type="PhylomeDB" id="Q8U111"/>
<dbReference type="Proteomes" id="UP000001013">
    <property type="component" value="Chromosome"/>
</dbReference>
<dbReference type="GO" id="GO:0005829">
    <property type="term" value="C:cytosol"/>
    <property type="evidence" value="ECO:0007669"/>
    <property type="project" value="TreeGrafter"/>
</dbReference>
<dbReference type="GO" id="GO:0000287">
    <property type="term" value="F:magnesium ion binding"/>
    <property type="evidence" value="ECO:0007669"/>
    <property type="project" value="InterPro"/>
</dbReference>
<dbReference type="GO" id="GO:0008967">
    <property type="term" value="F:phosphoglycolate phosphatase activity"/>
    <property type="evidence" value="ECO:0007669"/>
    <property type="project" value="UniProtKB-UniRule"/>
</dbReference>
<dbReference type="CDD" id="cd07514">
    <property type="entry name" value="HAD_Pase"/>
    <property type="match status" value="1"/>
</dbReference>
<dbReference type="Gene3D" id="3.90.1070.10">
    <property type="match status" value="1"/>
</dbReference>
<dbReference type="Gene3D" id="3.40.50.1000">
    <property type="entry name" value="HAD superfamily/HAD-like"/>
    <property type="match status" value="1"/>
</dbReference>
<dbReference type="HAMAP" id="MF_01419">
    <property type="entry name" value="GPH_hydrolase_arch"/>
    <property type="match status" value="1"/>
</dbReference>
<dbReference type="InterPro" id="IPR036412">
    <property type="entry name" value="HAD-like_sf"/>
</dbReference>
<dbReference type="InterPro" id="IPR023214">
    <property type="entry name" value="HAD_sf"/>
</dbReference>
<dbReference type="InterPro" id="IPR006382">
    <property type="entry name" value="PGPase"/>
</dbReference>
<dbReference type="NCBIfam" id="TIGR01487">
    <property type="entry name" value="Pglycolate_arch"/>
    <property type="match status" value="1"/>
</dbReference>
<dbReference type="NCBIfam" id="NF002245">
    <property type="entry name" value="PRK01158.1"/>
    <property type="match status" value="1"/>
</dbReference>
<dbReference type="NCBIfam" id="TIGR01482">
    <property type="entry name" value="SPP-subfamily"/>
    <property type="match status" value="1"/>
</dbReference>
<dbReference type="PANTHER" id="PTHR10000:SF8">
    <property type="entry name" value="HAD SUPERFAMILY HYDROLASE-LIKE, TYPE 3"/>
    <property type="match status" value="1"/>
</dbReference>
<dbReference type="PANTHER" id="PTHR10000">
    <property type="entry name" value="PHOSPHOSERINE PHOSPHATASE"/>
    <property type="match status" value="1"/>
</dbReference>
<dbReference type="Pfam" id="PF08282">
    <property type="entry name" value="Hydrolase_3"/>
    <property type="match status" value="2"/>
</dbReference>
<dbReference type="SFLD" id="SFLDG01140">
    <property type="entry name" value="C2.B:_Phosphomannomutase_and_P"/>
    <property type="match status" value="1"/>
</dbReference>
<dbReference type="SFLD" id="SFLDS00003">
    <property type="entry name" value="Haloacid_Dehalogenase"/>
    <property type="match status" value="1"/>
</dbReference>
<dbReference type="SUPFAM" id="SSF56784">
    <property type="entry name" value="HAD-like"/>
    <property type="match status" value="1"/>
</dbReference>
<evidence type="ECO:0000255" key="1">
    <source>
        <dbReference type="HAMAP-Rule" id="MF_01419"/>
    </source>
</evidence>
<accession>Q8U111</accession>
<keyword id="KW-0119">Carbohydrate metabolism</keyword>
<keyword id="KW-0378">Hydrolase</keyword>
<keyword id="KW-0460">Magnesium</keyword>
<keyword id="KW-0479">Metal-binding</keyword>
<keyword id="KW-1185">Reference proteome</keyword>
<feature type="chain" id="PRO_0000146724" description="Phosphoglycolate phosphatase">
    <location>
        <begin position="1"/>
        <end position="231"/>
    </location>
</feature>
<feature type="active site" description="Nucleophile" evidence="1">
    <location>
        <position position="9"/>
    </location>
</feature>
<feature type="binding site" evidence="1">
    <location>
        <position position="9"/>
    </location>
    <ligand>
        <name>Mg(2+)</name>
        <dbReference type="ChEBI" id="CHEBI:18420"/>
    </ligand>
</feature>
<feature type="binding site" evidence="1">
    <location>
        <position position="11"/>
    </location>
    <ligand>
        <name>Mg(2+)</name>
        <dbReference type="ChEBI" id="CHEBI:18420"/>
    </ligand>
</feature>
<feature type="binding site" evidence="1">
    <location>
        <position position="154"/>
    </location>
    <ligand>
        <name>substrate</name>
    </ligand>
</feature>
<feature type="binding site" evidence="1">
    <location>
        <position position="177"/>
    </location>
    <ligand>
        <name>Mg(2+)</name>
        <dbReference type="ChEBI" id="CHEBI:18420"/>
    </ligand>
</feature>
<feature type="binding site" evidence="1">
    <location>
        <position position="181"/>
    </location>
    <ligand>
        <name>Mg(2+)</name>
        <dbReference type="ChEBI" id="CHEBI:18420"/>
    </ligand>
</feature>
<comment type="function">
    <text evidence="1">Catalyzes the dephosphorylation of 2-phosphoglycolate.</text>
</comment>
<comment type="catalytic activity">
    <reaction evidence="1">
        <text>2-phosphoglycolate + H2O = glycolate + phosphate</text>
        <dbReference type="Rhea" id="RHEA:14369"/>
        <dbReference type="ChEBI" id="CHEBI:15377"/>
        <dbReference type="ChEBI" id="CHEBI:29805"/>
        <dbReference type="ChEBI" id="CHEBI:43474"/>
        <dbReference type="ChEBI" id="CHEBI:58033"/>
        <dbReference type="EC" id="3.1.3.18"/>
    </reaction>
</comment>
<comment type="cofactor">
    <cofactor evidence="1">
        <name>Mg(2+)</name>
        <dbReference type="ChEBI" id="CHEBI:18420"/>
    </cofactor>
</comment>
<comment type="similarity">
    <text evidence="1">Belongs to the archaeal SPP-like hydrolase family.</text>
</comment>
<organism>
    <name type="scientific">Pyrococcus furiosus (strain ATCC 43587 / DSM 3638 / JCM 8422 / Vc1)</name>
    <dbReference type="NCBI Taxonomy" id="186497"/>
    <lineage>
        <taxon>Archaea</taxon>
        <taxon>Methanobacteriati</taxon>
        <taxon>Methanobacteriota</taxon>
        <taxon>Thermococci</taxon>
        <taxon>Thermococcales</taxon>
        <taxon>Thermococcaceae</taxon>
        <taxon>Pyrococcus</taxon>
    </lineage>
</organism>
<protein>
    <recommendedName>
        <fullName evidence="1">Phosphoglycolate phosphatase</fullName>
        <shortName evidence="1">PGP</shortName>
        <shortName evidence="1">PGPase</shortName>
        <ecNumber evidence="1">3.1.3.18</ecNumber>
    </recommendedName>
</protein>
<gene>
    <name type="ordered locus">PF1419</name>
</gene>
<sequence length="231" mass="25506">MKIKAISLDIDGTITYPNRMIHEEALQAIRKAESLGVPIMLVTGNTVQFAEAASILIGTSGPVVAEDGGAISYKKKRIFLTSMDEEWILWGELKKRFPNVKTSHTMPDRRAGLVIMRETIDVETVRKLIKELNLNLVAVDSGFAIHVKKPWINKGSGIEKACELLGLNPKEVAHVGDGENDLDAFKVVGYRIAVAQAPKILKENADYITQNEYGKGGAEAIYHILEKFGYI</sequence>
<reference key="1">
    <citation type="journal article" date="1999" name="Genetics">
        <title>Divergence of the hyperthermophilic archaea Pyrococcus furiosus and P. horikoshii inferred from complete genomic sequences.</title>
        <authorList>
            <person name="Maeder D.L."/>
            <person name="Weiss R.B."/>
            <person name="Dunn D.M."/>
            <person name="Cherry J.L."/>
            <person name="Gonzalez J.M."/>
            <person name="DiRuggiero J."/>
            <person name="Robb F.T."/>
        </authorList>
    </citation>
    <scope>NUCLEOTIDE SEQUENCE [LARGE SCALE GENOMIC DNA]</scope>
    <source>
        <strain>ATCC 43587 / DSM 3638 / JCM 8422 / Vc1</strain>
    </source>
</reference>